<proteinExistence type="evidence at protein level"/>
<keyword id="KW-0325">Glycoprotein</keyword>
<keyword id="KW-0964">Secreted</keyword>
<keyword id="KW-0732">Signal</keyword>
<protein>
    <recommendedName>
        <fullName evidence="7">Salivary protein 15 Iper-2</fullName>
        <shortName evidence="8">IperSalp15-2</shortName>
        <shortName evidence="7">Salp15 Iper-2</shortName>
    </recommendedName>
    <alternativeName>
        <fullName evidence="7">Salp15-like</fullName>
    </alternativeName>
</protein>
<accession>B7XFU8</accession>
<organism>
    <name type="scientific">Ixodes persulcatus</name>
    <name type="common">Taiga tick</name>
    <dbReference type="NCBI Taxonomy" id="34615"/>
    <lineage>
        <taxon>Eukaryota</taxon>
        <taxon>Metazoa</taxon>
        <taxon>Ecdysozoa</taxon>
        <taxon>Arthropoda</taxon>
        <taxon>Chelicerata</taxon>
        <taxon>Arachnida</taxon>
        <taxon>Acari</taxon>
        <taxon>Parasitiformes</taxon>
        <taxon>Ixodida</taxon>
        <taxon>Ixodoidea</taxon>
        <taxon>Ixodidae</taxon>
        <taxon>Ixodinae</taxon>
        <taxon>Ixodes</taxon>
    </lineage>
</organism>
<name>SP152_IXOPE</name>
<evidence type="ECO:0000250" key="1">
    <source>
        <dbReference type="UniProtKB" id="A8CZZ0"/>
    </source>
</evidence>
<evidence type="ECO:0000250" key="2">
    <source>
        <dbReference type="UniProtKB" id="Q95WZ4"/>
    </source>
</evidence>
<evidence type="ECO:0000255" key="3"/>
<evidence type="ECO:0000255" key="4">
    <source>
        <dbReference type="PROSITE-ProRule" id="PRU00498"/>
    </source>
</evidence>
<evidence type="ECO:0000269" key="5">
    <source>
    </source>
</evidence>
<evidence type="ECO:0000269" key="6">
    <source>
    </source>
</evidence>
<evidence type="ECO:0000303" key="7">
    <source>
    </source>
</evidence>
<evidence type="ECO:0000303" key="8">
    <source>
    </source>
</evidence>
<evidence type="ECO:0000305" key="9"/>
<evidence type="ECO:0000305" key="10">
    <source>
    </source>
</evidence>
<evidence type="ECO:0000312" key="11">
    <source>
        <dbReference type="EMBL" id="BAH09311.1"/>
    </source>
</evidence>
<reference evidence="11" key="1">
    <citation type="journal article" date="2010" name="Insect Mol. Biol.">
        <title>Two novel Salp15-like immunosuppressant genes from salivary glands of Ixodes persulcatus Schulze tick.</title>
        <authorList>
            <person name="Mori A."/>
            <person name="Konnai S."/>
            <person name="Yamada S."/>
            <person name="Hidano A."/>
            <person name="Murase Y."/>
            <person name="Ito T."/>
            <person name="Takano A."/>
            <person name="Kawabata H."/>
            <person name="Onuma M."/>
            <person name="Ohashi K."/>
        </authorList>
    </citation>
    <scope>NUCLEOTIDE SEQUENCE [MRNA]</scope>
    <scope>TISSUE SPECIFICITY</scope>
    <scope>INDUCTION BY FEEDING</scope>
    <source>
        <tissue>Salivary gland</tissue>
    </source>
</reference>
<reference evidence="9" key="2">
    <citation type="journal article" date="2015" name="Insect Biochem. Mol. Biol.">
        <title>An investigation of binding ability of Ixodes persulcatus Schulze Salp15 with Lyme disease spirochetes.</title>
        <authorList>
            <person name="Murase Y."/>
            <person name="Konnai S."/>
            <person name="Yamada S."/>
            <person name="Githaka N."/>
            <person name="Isezaki M."/>
            <person name="Ito T."/>
            <person name="Takano A."/>
            <person name="Ando S."/>
            <person name="Kawabata H."/>
            <person name="Murata S."/>
            <person name="Ohashi K."/>
        </authorList>
    </citation>
    <scope>FUNCTION (MICROBIAL INFECTION)</scope>
    <scope>INTERACTION WITH BORRELIA OUTER SURFACE PROTEIN C (OSPC)</scope>
    <scope>SUBCELLULAR LOCATION</scope>
</reference>
<gene>
    <name evidence="11" type="primary">Salp15</name>
</gene>
<sequence length="132" mass="14562">MKVVCIIVLFVIVAVNESATSEANTSNAAKDTKKKNVTLQFPSYIQNPKQLALELLKICKNNKSSHNSLTSRSSYNYYAINDKYVDFKNCTFLCKHDKDINVTLNMPPNTPCGPNGQTCADKSQCVGHIPGC</sequence>
<dbReference type="EMBL" id="AB470646">
    <property type="protein sequence ID" value="BAH09311.1"/>
    <property type="molecule type" value="mRNA"/>
</dbReference>
<dbReference type="SMR" id="B7XFU8"/>
<dbReference type="GO" id="GO:0005576">
    <property type="term" value="C:extracellular region"/>
    <property type="evidence" value="ECO:0007669"/>
    <property type="project" value="UniProtKB-SubCell"/>
</dbReference>
<dbReference type="InterPro" id="IPR021971">
    <property type="entry name" value="Salp15"/>
</dbReference>
<dbReference type="Pfam" id="PF12115">
    <property type="entry name" value="Salp15"/>
    <property type="match status" value="1"/>
</dbReference>
<feature type="signal peptide" evidence="3">
    <location>
        <begin position="1"/>
        <end position="18"/>
    </location>
</feature>
<feature type="chain" id="PRO_5002865742" description="Salivary protein 15 Iper-2">
    <location>
        <begin position="19"/>
        <end position="132"/>
    </location>
</feature>
<feature type="region of interest" description="CD4-binding" evidence="2">
    <location>
        <begin position="113"/>
        <end position="132"/>
    </location>
</feature>
<feature type="glycosylation site" description="N-linked (GlcNAc...) asparagine" evidence="4">
    <location>
        <position position="24"/>
    </location>
</feature>
<feature type="glycosylation site" description="N-linked (GlcNAc...) asparagine" evidence="4">
    <location>
        <position position="36"/>
    </location>
</feature>
<feature type="glycosylation site" description="N-linked (GlcNAc...) asparagine" evidence="4">
    <location>
        <position position="62"/>
    </location>
</feature>
<feature type="glycosylation site" description="N-linked (GlcNAc...) asparagine" evidence="4">
    <location>
        <position position="89"/>
    </location>
</feature>
<feature type="glycosylation site" description="N-linked (GlcNAc...) asparagine" evidence="4">
    <location>
        <position position="101"/>
    </location>
</feature>
<comment type="function">
    <text evidence="1 2">Salivary tick protein that downregulates host immune system by binding to both dendritic cells, and CD4(+) T cells. Specifically binds to the CD4 coreceptor on T cells. This interaction prevents the activation of the Src kinase, Lck, and its downstream substrate Zap-70, and results in deficient activation of PLCgamma1, the repression of calcium fluxes triggered by T-cell antigen receptor (TCR) ligation, and a subsequent reduction in interleukin-2 production. This salivary protein also binds to DC-SIGN (CD209) on dendritic cells (DC) and activates the Raf-1 kinase/MEK signaling pathway that results in down-regulating expression of pro-inflammatory cytokines. Furthermore, it inhibits T cell proliferation induced by DCs (By similarity). It also inhibits in vitro keratinocyte inflammation induced by Borrelia burgdorferi or by the major outer surface protein (OspC) of Borrelia. In addition, it downregulates chemokines and monocyte chemoattractant protein 1, as well as several antimicrobial peptides such as defensins, cathelicidin, psoriasin, and RNase 7 (By similarity). Apart from its immunomodulatory activities, it is also associated with protection of Borrelia spirochetes from antibody-mediated killing through its binding to OspC. In vivo, tests on different immune disease animal models show promising therapeutic results, e.g., in inhibiting HIV infection, experimental autoimmune encephalomyelitis, transplantation rejection, and asthma (By similarity).</text>
</comment>
<comment type="function">
    <text evidence="6">(Microbial infection) Protects Borrelia garinii from anti-Borrelia antibody-mediated cytotoxicity in vitro (PubMed:25796479). May facilitate B.garinii transmission in mouse model (PubMed:25796479).</text>
</comment>
<comment type="function">
    <text evidence="6">(Microbial infection) Protects Borrelia burgdorferi from anti-Borrelia antibody-mediated cytotoxicity in vitro.</text>
</comment>
<comment type="function">
    <text evidence="6">(Microbial infection) Protects Borrelia afzelii from anti-Borrelia antibody-mediated cytotoxicity in vitro.</text>
</comment>
<comment type="subunit">
    <text evidence="2">Interacts with host CD4. Interacts with host DC-SIGN (CD209).</text>
</comment>
<comment type="subunit">
    <text evidence="6">(Microbial infection) Interacts with Borrelia outer surface protein C (OspC).</text>
</comment>
<comment type="subcellular location">
    <subcellularLocation>
        <location evidence="6 10">Secreted</location>
    </subcellularLocation>
</comment>
<comment type="tissue specificity">
    <text evidence="5">Expressed in salivary glands from feeding female ticks (PubMed:20201978). Highly expressed 1 day after start of feeding, and weakly expressed at the initiation of feeding and 4 days after start of feeding (PubMed:20201978).</text>
</comment>
<comment type="induction">
    <text evidence="5">By feeding.</text>
</comment>
<comment type="similarity">
    <text evidence="9">Belongs to the salp15 family.</text>
</comment>